<protein>
    <recommendedName>
        <fullName>Serine-protein kinase RsbW</fullName>
        <ecNumber>2.7.11.1</ecNumber>
    </recommendedName>
    <alternativeName>
        <fullName>Anti-sigma-B factor</fullName>
    </alternativeName>
    <alternativeName>
        <fullName>Sigma-B negative effector RsbW</fullName>
    </alternativeName>
</protein>
<gene>
    <name type="primary">rsbW</name>
    <name type="ordered locus">BSU04720</name>
</gene>
<evidence type="ECO:0000269" key="1">
    <source>
    </source>
</evidence>
<evidence type="ECO:0000269" key="2">
    <source>
    </source>
</evidence>
<evidence type="ECO:0000269" key="3">
    <source>
    </source>
</evidence>
<evidence type="ECO:0000269" key="4">
    <source>
    </source>
</evidence>
<evidence type="ECO:0000305" key="5"/>
<evidence type="ECO:0007829" key="6">
    <source>
        <dbReference type="PDB" id="6M37"/>
    </source>
</evidence>
<dbReference type="EC" id="2.7.11.1"/>
<dbReference type="EMBL" id="M34995">
    <property type="protein sequence ID" value="AAA22712.1"/>
    <property type="molecule type" value="Genomic_DNA"/>
</dbReference>
<dbReference type="EMBL" id="AB001488">
    <property type="protein sequence ID" value="BAA19309.1"/>
    <property type="molecule type" value="Genomic_DNA"/>
</dbReference>
<dbReference type="EMBL" id="AL009126">
    <property type="protein sequence ID" value="CAB12279.1"/>
    <property type="molecule type" value="Genomic_DNA"/>
</dbReference>
<dbReference type="PIR" id="B36131">
    <property type="entry name" value="B36131"/>
</dbReference>
<dbReference type="RefSeq" id="NP_388353.1">
    <property type="nucleotide sequence ID" value="NC_000964.3"/>
</dbReference>
<dbReference type="RefSeq" id="WP_003234299.1">
    <property type="nucleotide sequence ID" value="NZ_OZ025638.1"/>
</dbReference>
<dbReference type="PDB" id="6M36">
    <property type="method" value="X-ray"/>
    <property type="resolution" value="3.40 A"/>
    <property type="chains" value="A/C/E/G/I/K/M/O=5-145"/>
</dbReference>
<dbReference type="PDB" id="6M37">
    <property type="method" value="X-ray"/>
    <property type="resolution" value="3.10 A"/>
    <property type="chains" value="A/C=5-145"/>
</dbReference>
<dbReference type="PDBsum" id="6M36"/>
<dbReference type="PDBsum" id="6M37"/>
<dbReference type="SMR" id="P17904"/>
<dbReference type="BioGRID" id="855787">
    <property type="interactions" value="1"/>
</dbReference>
<dbReference type="DIP" id="DIP-319N"/>
<dbReference type="FunCoup" id="P17904">
    <property type="interactions" value="67"/>
</dbReference>
<dbReference type="IntAct" id="P17904">
    <property type="interactions" value="7"/>
</dbReference>
<dbReference type="STRING" id="224308.BSU04720"/>
<dbReference type="PaxDb" id="224308-BSU04720"/>
<dbReference type="DNASU" id="938167"/>
<dbReference type="EnsemblBacteria" id="CAB12279">
    <property type="protein sequence ID" value="CAB12279"/>
    <property type="gene ID" value="BSU_04720"/>
</dbReference>
<dbReference type="GeneID" id="76985545"/>
<dbReference type="GeneID" id="938167"/>
<dbReference type="KEGG" id="bsu:BSU04720"/>
<dbReference type="PATRIC" id="fig|224308.179.peg.500"/>
<dbReference type="eggNOG" id="COG2172">
    <property type="taxonomic scope" value="Bacteria"/>
</dbReference>
<dbReference type="InParanoid" id="P17904"/>
<dbReference type="OrthoDB" id="9798941at2"/>
<dbReference type="PhylomeDB" id="P17904"/>
<dbReference type="BioCyc" id="BSUB:BSU04720-MONOMER"/>
<dbReference type="PRO" id="PR:P17904"/>
<dbReference type="Proteomes" id="UP000001570">
    <property type="component" value="Chromosome"/>
</dbReference>
<dbReference type="GO" id="GO:0005524">
    <property type="term" value="F:ATP binding"/>
    <property type="evidence" value="ECO:0007669"/>
    <property type="project" value="UniProtKB-KW"/>
</dbReference>
<dbReference type="GO" id="GO:0106310">
    <property type="term" value="F:protein serine kinase activity"/>
    <property type="evidence" value="ECO:0007669"/>
    <property type="project" value="RHEA"/>
</dbReference>
<dbReference type="GO" id="GO:0004674">
    <property type="term" value="F:protein serine/threonine kinase activity"/>
    <property type="evidence" value="ECO:0007669"/>
    <property type="project" value="UniProtKB-KW"/>
</dbReference>
<dbReference type="GO" id="GO:0016989">
    <property type="term" value="F:sigma factor antagonist activity"/>
    <property type="evidence" value="ECO:0000315"/>
    <property type="project" value="CACAO"/>
</dbReference>
<dbReference type="GO" id="GO:0045892">
    <property type="term" value="P:negative regulation of DNA-templated transcription"/>
    <property type="evidence" value="ECO:0000318"/>
    <property type="project" value="GO_Central"/>
</dbReference>
<dbReference type="CDD" id="cd16936">
    <property type="entry name" value="HATPase_RsbW-like"/>
    <property type="match status" value="1"/>
</dbReference>
<dbReference type="FunFam" id="3.30.565.10:FF:000026">
    <property type="entry name" value="Serine-protein kinase RsbW"/>
    <property type="match status" value="1"/>
</dbReference>
<dbReference type="Gene3D" id="3.30.565.10">
    <property type="entry name" value="Histidine kinase-like ATPase, C-terminal domain"/>
    <property type="match status" value="1"/>
</dbReference>
<dbReference type="HAMAP" id="MF_00638">
    <property type="entry name" value="Anti_sigma_B"/>
    <property type="match status" value="1"/>
</dbReference>
<dbReference type="InterPro" id="IPR050267">
    <property type="entry name" value="Anti-sigma-factor_SerPK"/>
</dbReference>
<dbReference type="InterPro" id="IPR036890">
    <property type="entry name" value="HATPase_C_sf"/>
</dbReference>
<dbReference type="InterPro" id="IPR010193">
    <property type="entry name" value="RsbW"/>
</dbReference>
<dbReference type="NCBIfam" id="NF003144">
    <property type="entry name" value="PRK04069.1"/>
    <property type="match status" value="1"/>
</dbReference>
<dbReference type="NCBIfam" id="TIGR01924">
    <property type="entry name" value="rsbW_low_gc"/>
    <property type="match status" value="1"/>
</dbReference>
<dbReference type="PANTHER" id="PTHR35526">
    <property type="entry name" value="ANTI-SIGMA-F FACTOR RSBW-RELATED"/>
    <property type="match status" value="1"/>
</dbReference>
<dbReference type="PANTHER" id="PTHR35526:SF9">
    <property type="entry name" value="SERINE-PROTEIN KINASE RSBW"/>
    <property type="match status" value="1"/>
</dbReference>
<dbReference type="Pfam" id="PF13581">
    <property type="entry name" value="HATPase_c_2"/>
    <property type="match status" value="1"/>
</dbReference>
<dbReference type="SUPFAM" id="SSF55874">
    <property type="entry name" value="ATPase domain of HSP90 chaperone/DNA topoisomerase II/histidine kinase"/>
    <property type="match status" value="1"/>
</dbReference>
<name>RSBW_BACSU</name>
<proteinExistence type="evidence at protein level"/>
<sequence length="160" mass="17993">MKNNADYIEMKVPAQPEYVGIIRLTLSGVASRMGYTYDEIEDLKIAVSEACTNAVQHAYKEDKNGEVSIRFGVFEDRLEVIVADEGDSFDFDQKQQDLGPYTPSHTVDQLSEGGLGLYLMETLMDEVRVQNHSGVTVAMTKYLNGERVDHDTTIKNYETN</sequence>
<reference key="1">
    <citation type="journal article" date="1990" name="J. Bacteriol.">
        <title>Similar organization of the sigB and spoIIA operons encoding alternate sigma factors of Bacillus subtilis RNA polymerase.</title>
        <authorList>
            <person name="Kalman S."/>
            <person name="Duncan M.L."/>
            <person name="Thomas S.M."/>
            <person name="Price C.W."/>
        </authorList>
    </citation>
    <scope>NUCLEOTIDE SEQUENCE [GENOMIC DNA]</scope>
    <source>
        <strain>168</strain>
    </source>
</reference>
<reference key="2">
    <citation type="journal article" date="1987" name="J. Bacteriol.">
        <title>Gene encoding the 37,000-dalton minor sigma factor of Bacillus subtilis RNA polymerase: isolation, nucleotide sequence, chromosomal locus, and cryptic function.</title>
        <authorList>
            <person name="Duncan M.L."/>
            <person name="Kalman S.S."/>
            <person name="Thomas S.M."/>
            <person name="Price C.W."/>
        </authorList>
    </citation>
    <scope>NUCLEOTIDE SEQUENCE [GENOMIC DNA]</scope>
    <source>
        <strain>168</strain>
    </source>
</reference>
<reference key="3">
    <citation type="submission" date="1997-03" db="EMBL/GenBank/DDBJ databases">
        <title>A 148 kbp sequence of the region between 35 and 47 degree of the Bacillus subtilis genome.</title>
        <authorList>
            <person name="Kasahara Y."/>
            <person name="Nakai S."/>
            <person name="Lee S."/>
            <person name="Sadaie Y."/>
            <person name="Ogasawara N."/>
        </authorList>
    </citation>
    <scope>NUCLEOTIDE SEQUENCE [GENOMIC DNA]</scope>
    <source>
        <strain>168</strain>
    </source>
</reference>
<reference key="4">
    <citation type="journal article" date="1997" name="Nature">
        <title>The complete genome sequence of the Gram-positive bacterium Bacillus subtilis.</title>
        <authorList>
            <person name="Kunst F."/>
            <person name="Ogasawara N."/>
            <person name="Moszer I."/>
            <person name="Albertini A.M."/>
            <person name="Alloni G."/>
            <person name="Azevedo V."/>
            <person name="Bertero M.G."/>
            <person name="Bessieres P."/>
            <person name="Bolotin A."/>
            <person name="Borchert S."/>
            <person name="Borriss R."/>
            <person name="Boursier L."/>
            <person name="Brans A."/>
            <person name="Braun M."/>
            <person name="Brignell S.C."/>
            <person name="Bron S."/>
            <person name="Brouillet S."/>
            <person name="Bruschi C.V."/>
            <person name="Caldwell B."/>
            <person name="Capuano V."/>
            <person name="Carter N.M."/>
            <person name="Choi S.-K."/>
            <person name="Codani J.-J."/>
            <person name="Connerton I.F."/>
            <person name="Cummings N.J."/>
            <person name="Daniel R.A."/>
            <person name="Denizot F."/>
            <person name="Devine K.M."/>
            <person name="Duesterhoeft A."/>
            <person name="Ehrlich S.D."/>
            <person name="Emmerson P.T."/>
            <person name="Entian K.-D."/>
            <person name="Errington J."/>
            <person name="Fabret C."/>
            <person name="Ferrari E."/>
            <person name="Foulger D."/>
            <person name="Fritz C."/>
            <person name="Fujita M."/>
            <person name="Fujita Y."/>
            <person name="Fuma S."/>
            <person name="Galizzi A."/>
            <person name="Galleron N."/>
            <person name="Ghim S.-Y."/>
            <person name="Glaser P."/>
            <person name="Goffeau A."/>
            <person name="Golightly E.J."/>
            <person name="Grandi G."/>
            <person name="Guiseppi G."/>
            <person name="Guy B.J."/>
            <person name="Haga K."/>
            <person name="Haiech J."/>
            <person name="Harwood C.R."/>
            <person name="Henaut A."/>
            <person name="Hilbert H."/>
            <person name="Holsappel S."/>
            <person name="Hosono S."/>
            <person name="Hullo M.-F."/>
            <person name="Itaya M."/>
            <person name="Jones L.-M."/>
            <person name="Joris B."/>
            <person name="Karamata D."/>
            <person name="Kasahara Y."/>
            <person name="Klaerr-Blanchard M."/>
            <person name="Klein C."/>
            <person name="Kobayashi Y."/>
            <person name="Koetter P."/>
            <person name="Koningstein G."/>
            <person name="Krogh S."/>
            <person name="Kumano M."/>
            <person name="Kurita K."/>
            <person name="Lapidus A."/>
            <person name="Lardinois S."/>
            <person name="Lauber J."/>
            <person name="Lazarevic V."/>
            <person name="Lee S.-M."/>
            <person name="Levine A."/>
            <person name="Liu H."/>
            <person name="Masuda S."/>
            <person name="Mauel C."/>
            <person name="Medigue C."/>
            <person name="Medina N."/>
            <person name="Mellado R.P."/>
            <person name="Mizuno M."/>
            <person name="Moestl D."/>
            <person name="Nakai S."/>
            <person name="Noback M."/>
            <person name="Noone D."/>
            <person name="O'Reilly M."/>
            <person name="Ogawa K."/>
            <person name="Ogiwara A."/>
            <person name="Oudega B."/>
            <person name="Park S.-H."/>
            <person name="Parro V."/>
            <person name="Pohl T.M."/>
            <person name="Portetelle D."/>
            <person name="Porwollik S."/>
            <person name="Prescott A.M."/>
            <person name="Presecan E."/>
            <person name="Pujic P."/>
            <person name="Purnelle B."/>
            <person name="Rapoport G."/>
            <person name="Rey M."/>
            <person name="Reynolds S."/>
            <person name="Rieger M."/>
            <person name="Rivolta C."/>
            <person name="Rocha E."/>
            <person name="Roche B."/>
            <person name="Rose M."/>
            <person name="Sadaie Y."/>
            <person name="Sato T."/>
            <person name="Scanlan E."/>
            <person name="Schleich S."/>
            <person name="Schroeter R."/>
            <person name="Scoffone F."/>
            <person name="Sekiguchi J."/>
            <person name="Sekowska A."/>
            <person name="Seror S.J."/>
            <person name="Serror P."/>
            <person name="Shin B.-S."/>
            <person name="Soldo B."/>
            <person name="Sorokin A."/>
            <person name="Tacconi E."/>
            <person name="Takagi T."/>
            <person name="Takahashi H."/>
            <person name="Takemaru K."/>
            <person name="Takeuchi M."/>
            <person name="Tamakoshi A."/>
            <person name="Tanaka T."/>
            <person name="Terpstra P."/>
            <person name="Tognoni A."/>
            <person name="Tosato V."/>
            <person name="Uchiyama S."/>
            <person name="Vandenbol M."/>
            <person name="Vannier F."/>
            <person name="Vassarotti A."/>
            <person name="Viari A."/>
            <person name="Wambutt R."/>
            <person name="Wedler E."/>
            <person name="Wedler H."/>
            <person name="Weitzenegger T."/>
            <person name="Winters P."/>
            <person name="Wipat A."/>
            <person name="Yamamoto H."/>
            <person name="Yamane K."/>
            <person name="Yasumoto K."/>
            <person name="Yata K."/>
            <person name="Yoshida K."/>
            <person name="Yoshikawa H.-F."/>
            <person name="Zumstein E."/>
            <person name="Yoshikawa H."/>
            <person name="Danchin A."/>
        </authorList>
    </citation>
    <scope>NUCLEOTIDE SEQUENCE [LARGE SCALE GENOMIC DNA]</scope>
    <source>
        <strain>168</strain>
    </source>
</reference>
<reference key="5">
    <citation type="journal article" date="1994" name="Microbiology">
        <title>Analysis of the induction of general stress proteins of Bacillus subtilis.</title>
        <authorList>
            <person name="Voelker U."/>
            <person name="Engelmann S."/>
            <person name="Maul B."/>
            <person name="Riethdorf S."/>
            <person name="Voelker A."/>
            <person name="Schmid R."/>
            <person name="Mach H."/>
            <person name="Hecker M."/>
        </authorList>
    </citation>
    <scope>PROTEIN SEQUENCE OF 1-15</scope>
    <source>
        <strain>168 / IS58</strain>
    </source>
</reference>
<reference key="6">
    <citation type="journal article" date="1992" name="J. Bacteriol.">
        <title>Activation of Bacillus subtilis transcription factor sigma B by a regulatory pathway responsive to stationary-phase signals.</title>
        <authorList>
            <person name="Boylan S.A."/>
            <person name="Rutherford A."/>
            <person name="Thomas S.M."/>
            <person name="Price C.W."/>
        </authorList>
    </citation>
    <scope>FUNCTION</scope>
    <source>
        <strain>168 / Marburg / ATCC 6051 / DSM 10 / JCM 1465 / NBRC 13719 / NCIMB 3610 / NRRL NRS-744 / VKM B-501</strain>
    </source>
</reference>
<reference key="7">
    <citation type="journal article" date="1993" name="J. Bacteriol.">
        <title>Regulation of sigma B levels and activity in Bacillus subtilis.</title>
        <authorList>
            <person name="Benson A.K."/>
            <person name="Haldenwang W.G."/>
        </authorList>
    </citation>
    <scope>FUNCTION</scope>
    <source>
        <strain>PY22</strain>
    </source>
</reference>
<reference key="8">
    <citation type="journal article" date="1994" name="J. Bacteriol.">
        <title>Interactions between a Bacillus subtilis anti-sigma factor (RsbW) and its antagonist (RsbV).</title>
        <authorList>
            <person name="Dufour A."/>
            <person name="Haldenwang W.G."/>
        </authorList>
    </citation>
    <scope>FUNCTION</scope>
    <source>
        <strain>PY22</strain>
    </source>
</reference>
<reference key="9">
    <citation type="journal article" date="2002" name="J. Bacteriol.">
        <title>Protein-protein interactions that regulate the energy stress activation of sigma(B) in Bacillus subtilis.</title>
        <authorList>
            <person name="Delumeau O."/>
            <person name="Lewis R.J."/>
            <person name="Yudkin M.D."/>
        </authorList>
    </citation>
    <scope>CHARACTERIZATION</scope>
    <scope>MASS SPECTROMETRY</scope>
    <source>
        <strain>SG38</strain>
    </source>
</reference>
<feature type="chain" id="PRO_0000203532" description="Serine-protein kinase RsbW">
    <location>
        <begin position="1"/>
        <end position="160"/>
    </location>
</feature>
<feature type="sequence variant" description="In strain: IS58.">
    <original>A</original>
    <variation>S</variation>
    <location>
        <position position="14"/>
    </location>
</feature>
<feature type="strand" evidence="6">
    <location>
        <begin position="6"/>
        <end position="14"/>
    </location>
</feature>
<feature type="helix" evidence="6">
    <location>
        <begin position="16"/>
        <end position="18"/>
    </location>
</feature>
<feature type="helix" evidence="6">
    <location>
        <begin position="19"/>
        <end position="32"/>
    </location>
</feature>
<feature type="helix" evidence="6">
    <location>
        <begin position="37"/>
        <end position="60"/>
    </location>
</feature>
<feature type="strand" evidence="6">
    <location>
        <begin position="66"/>
        <end position="73"/>
    </location>
</feature>
<feature type="strand" evidence="6">
    <location>
        <begin position="75"/>
        <end position="83"/>
    </location>
</feature>
<feature type="helix" evidence="6">
    <location>
        <begin position="115"/>
        <end position="123"/>
    </location>
</feature>
<feature type="strand" evidence="6">
    <location>
        <begin position="124"/>
        <end position="130"/>
    </location>
</feature>
<feature type="strand" evidence="6">
    <location>
        <begin position="132"/>
        <end position="134"/>
    </location>
</feature>
<feature type="strand" evidence="6">
    <location>
        <begin position="136"/>
        <end position="142"/>
    </location>
</feature>
<organism>
    <name type="scientific">Bacillus subtilis (strain 168)</name>
    <dbReference type="NCBI Taxonomy" id="224308"/>
    <lineage>
        <taxon>Bacteria</taxon>
        <taxon>Bacillati</taxon>
        <taxon>Bacillota</taxon>
        <taxon>Bacilli</taxon>
        <taxon>Bacillales</taxon>
        <taxon>Bacillaceae</taxon>
        <taxon>Bacillus</taxon>
    </lineage>
</organism>
<comment type="function">
    <text evidence="2 3 4">Negative regulator of sigma-B activity. Phosphorylates and inactivates its specific antagonist protein, RsbV. Upon phosphorylation of RsbV, RsbW is released and binds to sigma-B, thereby blocking its ability to form an RNA polymerase holoenzyme (E-sigma-B).</text>
</comment>
<comment type="catalytic activity">
    <reaction>
        <text>L-seryl-[protein] + ATP = O-phospho-L-seryl-[protein] + ADP + H(+)</text>
        <dbReference type="Rhea" id="RHEA:17989"/>
        <dbReference type="Rhea" id="RHEA-COMP:9863"/>
        <dbReference type="Rhea" id="RHEA-COMP:11604"/>
        <dbReference type="ChEBI" id="CHEBI:15378"/>
        <dbReference type="ChEBI" id="CHEBI:29999"/>
        <dbReference type="ChEBI" id="CHEBI:30616"/>
        <dbReference type="ChEBI" id="CHEBI:83421"/>
        <dbReference type="ChEBI" id="CHEBI:456216"/>
        <dbReference type="EC" id="2.7.11.1"/>
    </reaction>
</comment>
<comment type="catalytic activity">
    <reaction>
        <text>L-threonyl-[protein] + ATP = O-phospho-L-threonyl-[protein] + ADP + H(+)</text>
        <dbReference type="Rhea" id="RHEA:46608"/>
        <dbReference type="Rhea" id="RHEA-COMP:11060"/>
        <dbReference type="Rhea" id="RHEA-COMP:11605"/>
        <dbReference type="ChEBI" id="CHEBI:15378"/>
        <dbReference type="ChEBI" id="CHEBI:30013"/>
        <dbReference type="ChEBI" id="CHEBI:30616"/>
        <dbReference type="ChEBI" id="CHEBI:61977"/>
        <dbReference type="ChEBI" id="CHEBI:456216"/>
        <dbReference type="EC" id="2.7.11.1"/>
    </reaction>
</comment>
<comment type="activity regulation">
    <text>The higher affinity of RsbW for RsbV than for sigma-B, rather than a difference in the concentrations of RsbV and sigma-B, is the driving force that is responsible for the switch of RsbW to non-phosphorylated RsbV. The kinase activity of RsbW is directly regulated by changes in the ATP/ADP ratio.</text>
</comment>
<comment type="subunit">
    <text>Homodimer. In stressed cells, forms a complex with RsbV. The predominant form of this complex has a stoichiometry of 2:2 (one dimer of RsbW is bound by two monomers of RsbV). In unstressed cells, forms a 2:1 complex with sigma-B.</text>
</comment>
<comment type="induction">
    <text>By heat shock, salt stress, oxidative stress, glucose limitation and oxygen limitation.</text>
</comment>
<comment type="mass spectrometry" mass="36220.0" method="Electrospray" evidence="1"/>
<comment type="similarity">
    <text evidence="5">Belongs to the anti-sigma-factor family.</text>
</comment>
<accession>P17904</accession>
<keyword id="KW-0002">3D-structure</keyword>
<keyword id="KW-0067">ATP-binding</keyword>
<keyword id="KW-0903">Direct protein sequencing</keyword>
<keyword id="KW-0418">Kinase</keyword>
<keyword id="KW-0547">Nucleotide-binding</keyword>
<keyword id="KW-1185">Reference proteome</keyword>
<keyword id="KW-0723">Serine/threonine-protein kinase</keyword>
<keyword id="KW-0346">Stress response</keyword>
<keyword id="KW-0808">Transferase</keyword>